<keyword id="KW-1185">Reference proteome</keyword>
<keyword id="KW-0687">Ribonucleoprotein</keyword>
<keyword id="KW-0689">Ribosomal protein</keyword>
<keyword id="KW-0694">RNA-binding</keyword>
<keyword id="KW-0699">rRNA-binding</keyword>
<proteinExistence type="inferred from homology"/>
<accession>A1KB16</accession>
<protein>
    <recommendedName>
        <fullName evidence="1">Large ribosomal subunit protein uL24</fullName>
    </recommendedName>
    <alternativeName>
        <fullName evidence="2">50S ribosomal protein L24</fullName>
    </alternativeName>
</protein>
<gene>
    <name evidence="1" type="primary">rplX</name>
    <name type="ordered locus">azo3406</name>
</gene>
<evidence type="ECO:0000255" key="1">
    <source>
        <dbReference type="HAMAP-Rule" id="MF_01326"/>
    </source>
</evidence>
<evidence type="ECO:0000305" key="2"/>
<dbReference type="EMBL" id="AM406670">
    <property type="protein sequence ID" value="CAL96022.1"/>
    <property type="molecule type" value="Genomic_DNA"/>
</dbReference>
<dbReference type="SMR" id="A1KB16"/>
<dbReference type="STRING" id="62928.azo3406"/>
<dbReference type="KEGG" id="aoa:dqs_3545"/>
<dbReference type="KEGG" id="azo:azo3406"/>
<dbReference type="eggNOG" id="COG0198">
    <property type="taxonomic scope" value="Bacteria"/>
</dbReference>
<dbReference type="HOGENOM" id="CLU_093315_2_2_4"/>
<dbReference type="OrthoDB" id="9807419at2"/>
<dbReference type="Proteomes" id="UP000002588">
    <property type="component" value="Chromosome"/>
</dbReference>
<dbReference type="GO" id="GO:1990904">
    <property type="term" value="C:ribonucleoprotein complex"/>
    <property type="evidence" value="ECO:0007669"/>
    <property type="project" value="UniProtKB-KW"/>
</dbReference>
<dbReference type="GO" id="GO:0005840">
    <property type="term" value="C:ribosome"/>
    <property type="evidence" value="ECO:0007669"/>
    <property type="project" value="UniProtKB-KW"/>
</dbReference>
<dbReference type="GO" id="GO:0019843">
    <property type="term" value="F:rRNA binding"/>
    <property type="evidence" value="ECO:0007669"/>
    <property type="project" value="UniProtKB-UniRule"/>
</dbReference>
<dbReference type="GO" id="GO:0003735">
    <property type="term" value="F:structural constituent of ribosome"/>
    <property type="evidence" value="ECO:0007669"/>
    <property type="project" value="InterPro"/>
</dbReference>
<dbReference type="GO" id="GO:0006412">
    <property type="term" value="P:translation"/>
    <property type="evidence" value="ECO:0007669"/>
    <property type="project" value="UniProtKB-UniRule"/>
</dbReference>
<dbReference type="CDD" id="cd06089">
    <property type="entry name" value="KOW_RPL26"/>
    <property type="match status" value="1"/>
</dbReference>
<dbReference type="FunFam" id="2.30.30.30:FF:000004">
    <property type="entry name" value="50S ribosomal protein L24"/>
    <property type="match status" value="1"/>
</dbReference>
<dbReference type="Gene3D" id="2.30.30.30">
    <property type="match status" value="1"/>
</dbReference>
<dbReference type="HAMAP" id="MF_01326_B">
    <property type="entry name" value="Ribosomal_uL24_B"/>
    <property type="match status" value="1"/>
</dbReference>
<dbReference type="InterPro" id="IPR005824">
    <property type="entry name" value="KOW"/>
</dbReference>
<dbReference type="InterPro" id="IPR014722">
    <property type="entry name" value="Rib_uL2_dom2"/>
</dbReference>
<dbReference type="InterPro" id="IPR003256">
    <property type="entry name" value="Ribosomal_uL24"/>
</dbReference>
<dbReference type="InterPro" id="IPR005825">
    <property type="entry name" value="Ribosomal_uL24_CS"/>
</dbReference>
<dbReference type="InterPro" id="IPR041988">
    <property type="entry name" value="Ribosomal_uL24_KOW"/>
</dbReference>
<dbReference type="InterPro" id="IPR008991">
    <property type="entry name" value="Translation_prot_SH3-like_sf"/>
</dbReference>
<dbReference type="NCBIfam" id="TIGR01079">
    <property type="entry name" value="rplX_bact"/>
    <property type="match status" value="1"/>
</dbReference>
<dbReference type="PANTHER" id="PTHR12903">
    <property type="entry name" value="MITOCHONDRIAL RIBOSOMAL PROTEIN L24"/>
    <property type="match status" value="1"/>
</dbReference>
<dbReference type="Pfam" id="PF00467">
    <property type="entry name" value="KOW"/>
    <property type="match status" value="1"/>
</dbReference>
<dbReference type="Pfam" id="PF17136">
    <property type="entry name" value="ribosomal_L24"/>
    <property type="match status" value="1"/>
</dbReference>
<dbReference type="SMART" id="SM00739">
    <property type="entry name" value="KOW"/>
    <property type="match status" value="1"/>
</dbReference>
<dbReference type="SUPFAM" id="SSF50104">
    <property type="entry name" value="Translation proteins SH3-like domain"/>
    <property type="match status" value="1"/>
</dbReference>
<dbReference type="PROSITE" id="PS01108">
    <property type="entry name" value="RIBOSOMAL_L24"/>
    <property type="match status" value="1"/>
</dbReference>
<reference key="1">
    <citation type="journal article" date="2006" name="Nat. Biotechnol.">
        <title>Complete genome of the mutualistic, N2-fixing grass endophyte Azoarcus sp. strain BH72.</title>
        <authorList>
            <person name="Krause A."/>
            <person name="Ramakumar A."/>
            <person name="Bartels D."/>
            <person name="Battistoni F."/>
            <person name="Bekel T."/>
            <person name="Boch J."/>
            <person name="Boehm M."/>
            <person name="Friedrich F."/>
            <person name="Hurek T."/>
            <person name="Krause L."/>
            <person name="Linke B."/>
            <person name="McHardy A.C."/>
            <person name="Sarkar A."/>
            <person name="Schneiker S."/>
            <person name="Syed A.A."/>
            <person name="Thauer R."/>
            <person name="Vorhoelter F.-J."/>
            <person name="Weidner S."/>
            <person name="Puehler A."/>
            <person name="Reinhold-Hurek B."/>
            <person name="Kaiser O."/>
            <person name="Goesmann A."/>
        </authorList>
    </citation>
    <scope>NUCLEOTIDE SEQUENCE [LARGE SCALE GENOMIC DNA]</scope>
    <source>
        <strain>BH72</strain>
    </source>
</reference>
<name>RL24_AZOSB</name>
<comment type="function">
    <text evidence="1">One of two assembly initiator proteins, it binds directly to the 5'-end of the 23S rRNA, where it nucleates assembly of the 50S subunit.</text>
</comment>
<comment type="function">
    <text evidence="1">One of the proteins that surrounds the polypeptide exit tunnel on the outside of the subunit.</text>
</comment>
<comment type="subunit">
    <text evidence="1">Part of the 50S ribosomal subunit.</text>
</comment>
<comment type="similarity">
    <text evidence="1">Belongs to the universal ribosomal protein uL24 family.</text>
</comment>
<organism>
    <name type="scientific">Azoarcus sp. (strain BH72)</name>
    <dbReference type="NCBI Taxonomy" id="418699"/>
    <lineage>
        <taxon>Bacteria</taxon>
        <taxon>Pseudomonadati</taxon>
        <taxon>Pseudomonadota</taxon>
        <taxon>Betaproteobacteria</taxon>
        <taxon>Rhodocyclales</taxon>
        <taxon>Zoogloeaceae</taxon>
        <taxon>Azoarcus</taxon>
    </lineage>
</organism>
<feature type="chain" id="PRO_1000052181" description="Large ribosomal subunit protein uL24">
    <location>
        <begin position="1"/>
        <end position="105"/>
    </location>
</feature>
<sequence>MNKIRKGDEVVVLAGKDRGRRGAVLRRVDDERVVVEGVNRVKKHVRPNPLKGEVGGIVEKEMPIHVSNVALFNPAAQKADRVGIKVLEDGRKVRFFKSNGELVDA</sequence>